<comment type="function">
    <text evidence="9">Component of the ribosome, a large ribonucleoprotein complex responsible for the synthesis of proteins in the cell. The small ribosomal subunit (SSU) binds messenger RNAs (mRNAs) and translates the encoded message by selecting cognate aminoacyl-transfer RNA (tRNA) molecules. The large subunit (LSU) contains the ribosomal catalytic site termed the peptidyl transferase center (PTC), which catalyzes the formation of peptide bonds, thereby polymerizing the amino acids delivered by tRNAs into a polypeptide chain. The nascent polypeptides leave the ribosome through a tunnel in the LSU and interact with protein factors that function in enzymatic processing, targeting, and the membrane insertion of nascent chains at the exit of the ribosomal tunnel.</text>
</comment>
<comment type="subunit">
    <text evidence="5 10">Component of the large ribosomal subunit (LSU). Mature yeast ribosomes consist of a small (40S) and a large (60S) subunit. The 40S small subunit contains 1 molecule of ribosomal RNA (18S rRNA) and 33 different proteins (encoded by 57 genes). The large 60S subunit contains 3 rRNA molecules (25S, 5.8S and 5S rRNA) and 46 different proteins (encoded by 81 genes) (PubMed:22096102, PubMed:9559554).</text>
</comment>
<comment type="subcellular location">
    <subcellularLocation>
        <location evidence="3 5">Cytoplasm</location>
    </subcellularLocation>
</comment>
<comment type="miscellaneous">
    <text evidence="4">Present with 247000 molecules/cell in log phase SD medium.</text>
</comment>
<comment type="miscellaneous">
    <text evidence="8">There are 2 genes for eL24 in yeast.</text>
</comment>
<comment type="similarity">
    <text evidence="8">Belongs to the eukaryotic ribosomal protein eL24 family.</text>
</comment>
<keyword id="KW-0002">3D-structure</keyword>
<keyword id="KW-0963">Cytoplasm</keyword>
<keyword id="KW-0597">Phosphoprotein</keyword>
<keyword id="KW-1185">Reference proteome</keyword>
<keyword id="KW-0687">Ribonucleoprotein</keyword>
<keyword id="KW-0689">Ribosomal protein</keyword>
<name>RL24A_YEAST</name>
<sequence>MKVEIDSFSGAKIYPGRGTLFVRGDSKIFRFQNSKSASLFKQRKNPRRIAWTVLFRKHHKKGITEEVAKKRSRKTVKAQRPITGASLDLIKERRSLKPEVRKANREEKLKANKEKKKAEKAARKAEKAKSAGTQSSKFSKQQAKGAFQKVAATSR</sequence>
<evidence type="ECO:0000250" key="1">
    <source>
        <dbReference type="UniProtKB" id="P24000"/>
    </source>
</evidence>
<evidence type="ECO:0000256" key="2">
    <source>
        <dbReference type="SAM" id="MobiDB-lite"/>
    </source>
</evidence>
<evidence type="ECO:0000269" key="3">
    <source>
    </source>
</evidence>
<evidence type="ECO:0000269" key="4">
    <source>
    </source>
</evidence>
<evidence type="ECO:0000269" key="5">
    <source>
    </source>
</evidence>
<evidence type="ECO:0000303" key="6">
    <source>
    </source>
</evidence>
<evidence type="ECO:0000303" key="7">
    <source>
    </source>
</evidence>
<evidence type="ECO:0000305" key="8"/>
<evidence type="ECO:0000305" key="9">
    <source>
    </source>
</evidence>
<evidence type="ECO:0000305" key="10">
    <source>
    </source>
</evidence>
<evidence type="ECO:0007829" key="11">
    <source>
        <dbReference type="PDB" id="4U4R"/>
    </source>
</evidence>
<evidence type="ECO:0007829" key="12">
    <source>
        <dbReference type="PDB" id="4U4U"/>
    </source>
</evidence>
<organism>
    <name type="scientific">Saccharomyces cerevisiae (strain ATCC 204508 / S288c)</name>
    <name type="common">Baker's yeast</name>
    <dbReference type="NCBI Taxonomy" id="559292"/>
    <lineage>
        <taxon>Eukaryota</taxon>
        <taxon>Fungi</taxon>
        <taxon>Dikarya</taxon>
        <taxon>Ascomycota</taxon>
        <taxon>Saccharomycotina</taxon>
        <taxon>Saccharomycetes</taxon>
        <taxon>Saccharomycetales</taxon>
        <taxon>Saccharomycetaceae</taxon>
        <taxon>Saccharomyces</taxon>
    </lineage>
</organism>
<proteinExistence type="evidence at protein level"/>
<feature type="chain" id="PRO_0000136894" description="Large ribosomal subunit protein eL24A">
    <location>
        <begin position="1"/>
        <end position="155"/>
    </location>
</feature>
<feature type="region of interest" description="Disordered" evidence="2">
    <location>
        <begin position="66"/>
        <end position="155"/>
    </location>
</feature>
<feature type="compositionally biased region" description="Basic and acidic residues" evidence="2">
    <location>
        <begin position="89"/>
        <end position="129"/>
    </location>
</feature>
<feature type="compositionally biased region" description="Polar residues" evidence="2">
    <location>
        <begin position="131"/>
        <end position="142"/>
    </location>
</feature>
<feature type="modified residue" description="Phosphoserine" evidence="1">
    <location>
        <position position="7"/>
    </location>
</feature>
<feature type="turn" evidence="11">
    <location>
        <begin position="7"/>
        <end position="9"/>
    </location>
</feature>
<feature type="strand" evidence="11">
    <location>
        <begin position="18"/>
        <end position="22"/>
    </location>
</feature>
<feature type="strand" evidence="12">
    <location>
        <begin position="24"/>
        <end position="26"/>
    </location>
</feature>
<feature type="strand" evidence="11">
    <location>
        <begin position="28"/>
        <end position="33"/>
    </location>
</feature>
<feature type="helix" evidence="11">
    <location>
        <begin position="34"/>
        <end position="41"/>
    </location>
</feature>
<feature type="helix" evidence="11">
    <location>
        <begin position="46"/>
        <end position="48"/>
    </location>
</feature>
<feature type="helix" evidence="11">
    <location>
        <begin position="53"/>
        <end position="58"/>
    </location>
</feature>
<feature type="turn" evidence="11">
    <location>
        <begin position="59"/>
        <end position="62"/>
    </location>
</feature>
<feature type="helix" evidence="11">
    <location>
        <begin position="64"/>
        <end position="66"/>
    </location>
</feature>
<feature type="strand" evidence="11">
    <location>
        <begin position="83"/>
        <end position="85"/>
    </location>
</feature>
<feature type="turn" evidence="11">
    <location>
        <begin position="87"/>
        <end position="90"/>
    </location>
</feature>
<feature type="strand" evidence="11">
    <location>
        <begin position="91"/>
        <end position="93"/>
    </location>
</feature>
<feature type="helix" evidence="11">
    <location>
        <begin position="98"/>
        <end position="111"/>
    </location>
</feature>
<feature type="helix" evidence="11">
    <location>
        <begin position="113"/>
        <end position="128"/>
    </location>
</feature>
<feature type="turn" evidence="11">
    <location>
        <begin position="130"/>
        <end position="132"/>
    </location>
</feature>
<dbReference type="EMBL" id="K02650">
    <property type="protein sequence ID" value="AAA35004.1"/>
    <property type="molecule type" value="Genomic_DNA"/>
</dbReference>
<dbReference type="EMBL" id="Z72553">
    <property type="protein sequence ID" value="CAA96732.1"/>
    <property type="molecule type" value="Genomic_DNA"/>
</dbReference>
<dbReference type="EMBL" id="EF123140">
    <property type="protein sequence ID" value="ABM97484.1"/>
    <property type="molecule type" value="mRNA"/>
</dbReference>
<dbReference type="EMBL" id="BK006941">
    <property type="protein sequence ID" value="DAA08068.1"/>
    <property type="molecule type" value="Genomic_DNA"/>
</dbReference>
<dbReference type="PIR" id="A02783">
    <property type="entry name" value="R6BYT9"/>
</dbReference>
<dbReference type="RefSeq" id="NP_011484.1">
    <property type="nucleotide sequence ID" value="NM_001180896.1"/>
</dbReference>
<dbReference type="PDB" id="2X7N">
    <property type="method" value="EM"/>
    <property type="resolution" value="11.80 A"/>
    <property type="chains" value="D=1-56"/>
</dbReference>
<dbReference type="PDB" id="3J6X">
    <property type="method" value="EM"/>
    <property type="resolution" value="6.10 A"/>
    <property type="chains" value="64=1-155"/>
</dbReference>
<dbReference type="PDB" id="3J6Y">
    <property type="method" value="EM"/>
    <property type="resolution" value="6.10 A"/>
    <property type="chains" value="64=1-155"/>
</dbReference>
<dbReference type="PDB" id="3J77">
    <property type="method" value="EM"/>
    <property type="resolution" value="6.20 A"/>
    <property type="chains" value="74=1-155"/>
</dbReference>
<dbReference type="PDB" id="3J78">
    <property type="method" value="EM"/>
    <property type="resolution" value="6.30 A"/>
    <property type="chains" value="74=1-155"/>
</dbReference>
<dbReference type="PDB" id="4U3M">
    <property type="method" value="X-ray"/>
    <property type="resolution" value="3.00 A"/>
    <property type="chains" value="N4/n4=1-155"/>
</dbReference>
<dbReference type="PDB" id="4U3N">
    <property type="method" value="X-ray"/>
    <property type="resolution" value="3.20 A"/>
    <property type="chains" value="N4/n4=1-155"/>
</dbReference>
<dbReference type="PDB" id="4U3U">
    <property type="method" value="X-ray"/>
    <property type="resolution" value="2.90 A"/>
    <property type="chains" value="N4/n4=1-155"/>
</dbReference>
<dbReference type="PDB" id="4U4N">
    <property type="method" value="X-ray"/>
    <property type="resolution" value="3.10 A"/>
    <property type="chains" value="N4/n4=1-155"/>
</dbReference>
<dbReference type="PDB" id="4U4O">
    <property type="method" value="X-ray"/>
    <property type="resolution" value="3.60 A"/>
    <property type="chains" value="N4/n4=1-155"/>
</dbReference>
<dbReference type="PDB" id="4U4Q">
    <property type="method" value="X-ray"/>
    <property type="resolution" value="3.00 A"/>
    <property type="chains" value="N4/n4=1-155"/>
</dbReference>
<dbReference type="PDB" id="4U4R">
    <property type="method" value="X-ray"/>
    <property type="resolution" value="2.80 A"/>
    <property type="chains" value="N4/n4=1-155"/>
</dbReference>
<dbReference type="PDB" id="4U4U">
    <property type="method" value="X-ray"/>
    <property type="resolution" value="3.00 A"/>
    <property type="chains" value="N4/n4=1-155"/>
</dbReference>
<dbReference type="PDB" id="4U4Y">
    <property type="method" value="X-ray"/>
    <property type="resolution" value="3.20 A"/>
    <property type="chains" value="N4/n4=1-155"/>
</dbReference>
<dbReference type="PDB" id="4U4Z">
    <property type="method" value="X-ray"/>
    <property type="resolution" value="3.10 A"/>
    <property type="chains" value="N4/n4=1-155"/>
</dbReference>
<dbReference type="PDB" id="4U50">
    <property type="method" value="X-ray"/>
    <property type="resolution" value="3.20 A"/>
    <property type="chains" value="N4/n4=1-155"/>
</dbReference>
<dbReference type="PDB" id="4U51">
    <property type="method" value="X-ray"/>
    <property type="resolution" value="3.20 A"/>
    <property type="chains" value="N4/n4=1-155"/>
</dbReference>
<dbReference type="PDB" id="4U52">
    <property type="method" value="X-ray"/>
    <property type="resolution" value="3.00 A"/>
    <property type="chains" value="N4/n4=1-155"/>
</dbReference>
<dbReference type="PDB" id="4U53">
    <property type="method" value="X-ray"/>
    <property type="resolution" value="3.30 A"/>
    <property type="chains" value="N4/n4=1-155"/>
</dbReference>
<dbReference type="PDB" id="4U55">
    <property type="method" value="X-ray"/>
    <property type="resolution" value="3.20 A"/>
    <property type="chains" value="N4/n4=1-155"/>
</dbReference>
<dbReference type="PDB" id="4U56">
    <property type="method" value="X-ray"/>
    <property type="resolution" value="3.45 A"/>
    <property type="chains" value="N4/n4=1-155"/>
</dbReference>
<dbReference type="PDB" id="4U6F">
    <property type="method" value="X-ray"/>
    <property type="resolution" value="3.10 A"/>
    <property type="chains" value="N4/n4=1-155"/>
</dbReference>
<dbReference type="PDB" id="4V4B">
    <property type="method" value="EM"/>
    <property type="resolution" value="11.70 A"/>
    <property type="chains" value="BS=1-56"/>
</dbReference>
<dbReference type="PDB" id="4V5Z">
    <property type="method" value="EM"/>
    <property type="resolution" value="8.70 A"/>
    <property type="chains" value="Bu=1-140"/>
</dbReference>
<dbReference type="PDB" id="4V6I">
    <property type="method" value="EM"/>
    <property type="resolution" value="8.80 A"/>
    <property type="chains" value="BZ=1-155"/>
</dbReference>
<dbReference type="PDB" id="4V7R">
    <property type="method" value="X-ray"/>
    <property type="resolution" value="4.00 A"/>
    <property type="chains" value="BV/DV=1-155"/>
</dbReference>
<dbReference type="PDB" id="4V88">
    <property type="method" value="X-ray"/>
    <property type="resolution" value="3.00 A"/>
    <property type="chains" value="BW/DW=1-155"/>
</dbReference>
<dbReference type="PDB" id="4V8T">
    <property type="method" value="EM"/>
    <property type="resolution" value="8.10 A"/>
    <property type="chains" value="W=1-155"/>
</dbReference>
<dbReference type="PDB" id="4V8Y">
    <property type="method" value="EM"/>
    <property type="resolution" value="4.30 A"/>
    <property type="chains" value="BW=1-155"/>
</dbReference>
<dbReference type="PDB" id="4V8Z">
    <property type="method" value="EM"/>
    <property type="resolution" value="6.60 A"/>
    <property type="chains" value="BW=1-155"/>
</dbReference>
<dbReference type="PDB" id="4V91">
    <property type="method" value="EM"/>
    <property type="resolution" value="3.70 A"/>
    <property type="chains" value="W=1-155"/>
</dbReference>
<dbReference type="PDB" id="5APN">
    <property type="method" value="EM"/>
    <property type="resolution" value="3.91 A"/>
    <property type="chains" value="W=1-155"/>
</dbReference>
<dbReference type="PDB" id="5APO">
    <property type="method" value="EM"/>
    <property type="resolution" value="3.41 A"/>
    <property type="chains" value="W=1-155"/>
</dbReference>
<dbReference type="PDB" id="5DAT">
    <property type="method" value="X-ray"/>
    <property type="resolution" value="3.15 A"/>
    <property type="chains" value="N4/n4=1-155"/>
</dbReference>
<dbReference type="PDB" id="5DC3">
    <property type="method" value="X-ray"/>
    <property type="resolution" value="3.25 A"/>
    <property type="chains" value="N4/n4=1-155"/>
</dbReference>
<dbReference type="PDB" id="5DGE">
    <property type="method" value="X-ray"/>
    <property type="resolution" value="3.45 A"/>
    <property type="chains" value="N4/n4=1-155"/>
</dbReference>
<dbReference type="PDB" id="5DGF">
    <property type="method" value="X-ray"/>
    <property type="resolution" value="3.30 A"/>
    <property type="chains" value="N4/n4=1-155"/>
</dbReference>
<dbReference type="PDB" id="5DGV">
    <property type="method" value="X-ray"/>
    <property type="resolution" value="3.10 A"/>
    <property type="chains" value="N4/n4=1-155"/>
</dbReference>
<dbReference type="PDB" id="5FCI">
    <property type="method" value="X-ray"/>
    <property type="resolution" value="3.40 A"/>
    <property type="chains" value="N4/n4=1-155"/>
</dbReference>
<dbReference type="PDB" id="5FCJ">
    <property type="method" value="X-ray"/>
    <property type="resolution" value="3.10 A"/>
    <property type="chains" value="N4/n4=1-155"/>
</dbReference>
<dbReference type="PDB" id="5GAK">
    <property type="method" value="EM"/>
    <property type="resolution" value="3.88 A"/>
    <property type="chains" value="Y=1-155"/>
</dbReference>
<dbReference type="PDB" id="5H4P">
    <property type="method" value="EM"/>
    <property type="resolution" value="3.07 A"/>
    <property type="chains" value="W=1-155"/>
</dbReference>
<dbReference type="PDB" id="5I4L">
    <property type="method" value="X-ray"/>
    <property type="resolution" value="3.10 A"/>
    <property type="chains" value="N4=1-98, n4=1-135"/>
</dbReference>
<dbReference type="PDB" id="5JUO">
    <property type="method" value="EM"/>
    <property type="resolution" value="4.00 A"/>
    <property type="chains" value="BA=1-155"/>
</dbReference>
<dbReference type="PDB" id="5JUP">
    <property type="method" value="EM"/>
    <property type="resolution" value="3.50 A"/>
    <property type="chains" value="BA=1-155"/>
</dbReference>
<dbReference type="PDB" id="5JUS">
    <property type="method" value="EM"/>
    <property type="resolution" value="4.20 A"/>
    <property type="chains" value="BA=1-155"/>
</dbReference>
<dbReference type="PDB" id="5JUT">
    <property type="method" value="EM"/>
    <property type="resolution" value="4.00 A"/>
    <property type="chains" value="BA=1-155"/>
</dbReference>
<dbReference type="PDB" id="5JUU">
    <property type="method" value="EM"/>
    <property type="resolution" value="4.00 A"/>
    <property type="chains" value="BA=1-155"/>
</dbReference>
<dbReference type="PDB" id="5LYB">
    <property type="method" value="X-ray"/>
    <property type="resolution" value="3.25 A"/>
    <property type="chains" value="N4=1-98, n4=1-135"/>
</dbReference>
<dbReference type="PDB" id="5M1J">
    <property type="method" value="EM"/>
    <property type="resolution" value="3.30 A"/>
    <property type="chains" value="W5=1-98"/>
</dbReference>
<dbReference type="PDB" id="5MC6">
    <property type="method" value="EM"/>
    <property type="resolution" value="3.80 A"/>
    <property type="chains" value="AE=1-155"/>
</dbReference>
<dbReference type="PDB" id="5MEI">
    <property type="method" value="X-ray"/>
    <property type="resolution" value="3.50 A"/>
    <property type="chains" value="7/CY=1-98"/>
</dbReference>
<dbReference type="PDB" id="5NDG">
    <property type="method" value="X-ray"/>
    <property type="resolution" value="3.70 A"/>
    <property type="chains" value="N4/n4=1-155"/>
</dbReference>
<dbReference type="PDB" id="5NDV">
    <property type="method" value="X-ray"/>
    <property type="resolution" value="3.30 A"/>
    <property type="chains" value="N4/n4=1-155"/>
</dbReference>
<dbReference type="PDB" id="5NDW">
    <property type="method" value="X-ray"/>
    <property type="resolution" value="3.70 A"/>
    <property type="chains" value="N4/n4=1-155"/>
</dbReference>
<dbReference type="PDB" id="5OBM">
    <property type="method" value="X-ray"/>
    <property type="resolution" value="3.40 A"/>
    <property type="chains" value="N4=1-155, n4=1-135"/>
</dbReference>
<dbReference type="PDB" id="5ON6">
    <property type="method" value="X-ray"/>
    <property type="resolution" value="3.10 A"/>
    <property type="chains" value="7/CY=1-98"/>
</dbReference>
<dbReference type="PDB" id="5T62">
    <property type="method" value="EM"/>
    <property type="resolution" value="3.30 A"/>
    <property type="chains" value="j=1-155"/>
</dbReference>
<dbReference type="PDB" id="5T6R">
    <property type="method" value="EM"/>
    <property type="resolution" value="4.50 A"/>
    <property type="chains" value="j=1-155"/>
</dbReference>
<dbReference type="PDB" id="5TBW">
    <property type="method" value="X-ray"/>
    <property type="resolution" value="3.00 A"/>
    <property type="chains" value="7/CY=1-98"/>
</dbReference>
<dbReference type="PDB" id="5TGA">
    <property type="method" value="X-ray"/>
    <property type="resolution" value="3.30 A"/>
    <property type="chains" value="N4/n4=1-135"/>
</dbReference>
<dbReference type="PDB" id="5TGM">
    <property type="method" value="X-ray"/>
    <property type="resolution" value="3.50 A"/>
    <property type="chains" value="N4=1-98, n4=1-135"/>
</dbReference>
<dbReference type="PDB" id="6GQ1">
    <property type="method" value="EM"/>
    <property type="resolution" value="4.40 A"/>
    <property type="chains" value="W=1-63"/>
</dbReference>
<dbReference type="PDB" id="6GQB">
    <property type="method" value="EM"/>
    <property type="resolution" value="3.90 A"/>
    <property type="chains" value="W=1-64"/>
</dbReference>
<dbReference type="PDB" id="6GQV">
    <property type="method" value="EM"/>
    <property type="resolution" value="4.00 A"/>
    <property type="chains" value="W=1-62"/>
</dbReference>
<dbReference type="PDB" id="6HD7">
    <property type="method" value="EM"/>
    <property type="resolution" value="3.40 A"/>
    <property type="chains" value="Y=1-155"/>
</dbReference>
<dbReference type="PDB" id="6HHQ">
    <property type="method" value="X-ray"/>
    <property type="resolution" value="3.10 A"/>
    <property type="chains" value="7/CY=1-155"/>
</dbReference>
<dbReference type="PDB" id="6I7O">
    <property type="method" value="EM"/>
    <property type="resolution" value="5.30 A"/>
    <property type="chains" value="AE/XE=1-135"/>
</dbReference>
<dbReference type="PDB" id="6N8M">
    <property type="method" value="EM"/>
    <property type="resolution" value="3.50 A"/>
    <property type="chains" value="j=1-155"/>
</dbReference>
<dbReference type="PDB" id="6N8N">
    <property type="method" value="EM"/>
    <property type="resolution" value="3.80 A"/>
    <property type="chains" value="j=1-155"/>
</dbReference>
<dbReference type="PDB" id="6N8O">
    <property type="method" value="EM"/>
    <property type="resolution" value="3.50 A"/>
    <property type="chains" value="j=1-155"/>
</dbReference>
<dbReference type="PDB" id="6OIG">
    <property type="method" value="EM"/>
    <property type="resolution" value="3.80 A"/>
    <property type="chains" value="W=1-135"/>
</dbReference>
<dbReference type="PDB" id="6Q8Y">
    <property type="method" value="EM"/>
    <property type="resolution" value="3.10 A"/>
    <property type="chains" value="AE=1-67"/>
</dbReference>
<dbReference type="PDB" id="6QIK">
    <property type="method" value="EM"/>
    <property type="resolution" value="3.10 A"/>
    <property type="chains" value="v=1-155"/>
</dbReference>
<dbReference type="PDB" id="6QT0">
    <property type="method" value="EM"/>
    <property type="resolution" value="3.40 A"/>
    <property type="chains" value="v=1-155"/>
</dbReference>
<dbReference type="PDB" id="6QTZ">
    <property type="method" value="EM"/>
    <property type="resolution" value="3.50 A"/>
    <property type="chains" value="v=1-155"/>
</dbReference>
<dbReference type="PDB" id="6R84">
    <property type="method" value="EM"/>
    <property type="resolution" value="3.60 A"/>
    <property type="chains" value="Y=1-62"/>
</dbReference>
<dbReference type="PDB" id="6R86">
    <property type="method" value="EM"/>
    <property type="resolution" value="3.40 A"/>
    <property type="chains" value="Y=1-62"/>
</dbReference>
<dbReference type="PDB" id="6R87">
    <property type="method" value="EM"/>
    <property type="resolution" value="3.40 A"/>
    <property type="chains" value="Y=1-62"/>
</dbReference>
<dbReference type="PDB" id="6RI5">
    <property type="method" value="EM"/>
    <property type="resolution" value="3.30 A"/>
    <property type="chains" value="v=1-155"/>
</dbReference>
<dbReference type="PDB" id="6RZZ">
    <property type="method" value="EM"/>
    <property type="resolution" value="3.20 A"/>
    <property type="chains" value="v=1-155"/>
</dbReference>
<dbReference type="PDB" id="6S05">
    <property type="method" value="EM"/>
    <property type="resolution" value="3.90 A"/>
    <property type="chains" value="v=1-155"/>
</dbReference>
<dbReference type="PDB" id="6S47">
    <property type="method" value="EM"/>
    <property type="resolution" value="3.28 A"/>
    <property type="chains" value="AY=1-155"/>
</dbReference>
<dbReference type="PDB" id="6SNT">
    <property type="method" value="EM"/>
    <property type="resolution" value="2.80 A"/>
    <property type="chains" value="at=1-155"/>
</dbReference>
<dbReference type="PDB" id="6SV4">
    <property type="method" value="EM"/>
    <property type="resolution" value="3.30 A"/>
    <property type="chains" value="AE/XE/zE=1-135"/>
</dbReference>
<dbReference type="PDB" id="6T4Q">
    <property type="method" value="EM"/>
    <property type="resolution" value="2.60 A"/>
    <property type="chains" value="LW=1-126"/>
</dbReference>
<dbReference type="PDB" id="6T7T">
    <property type="method" value="EM"/>
    <property type="resolution" value="3.10 A"/>
    <property type="chains" value="LW=1-155"/>
</dbReference>
<dbReference type="PDB" id="6T83">
    <property type="method" value="EM"/>
    <property type="resolution" value="4.00 A"/>
    <property type="chains" value="H/Wy=1-155"/>
</dbReference>
<dbReference type="PDB" id="6TB3">
    <property type="method" value="EM"/>
    <property type="resolution" value="2.80 A"/>
    <property type="chains" value="AE=1-126"/>
</dbReference>
<dbReference type="PDB" id="6TNU">
    <property type="method" value="EM"/>
    <property type="resolution" value="3.10 A"/>
    <property type="chains" value="AE=1-126"/>
</dbReference>
<dbReference type="PDB" id="6WOO">
    <property type="method" value="EM"/>
    <property type="resolution" value="2.90 A"/>
    <property type="chains" value="W=2-63"/>
</dbReference>
<dbReference type="PDB" id="6Z6J">
    <property type="method" value="EM"/>
    <property type="resolution" value="3.40 A"/>
    <property type="chains" value="LW=1-155"/>
</dbReference>
<dbReference type="PDB" id="6Z6K">
    <property type="method" value="EM"/>
    <property type="resolution" value="3.40 A"/>
    <property type="chains" value="LW=1-155"/>
</dbReference>
<dbReference type="PDB" id="7AZY">
    <property type="method" value="EM"/>
    <property type="resolution" value="2.88 A"/>
    <property type="chains" value="f=1-155"/>
</dbReference>
<dbReference type="PDB" id="7B7D">
    <property type="method" value="EM"/>
    <property type="resolution" value="3.30 A"/>
    <property type="chains" value="LS=1-126"/>
</dbReference>
<dbReference type="PDB" id="7MPI">
    <property type="method" value="EM"/>
    <property type="resolution" value="3.05 A"/>
    <property type="chains" value="AW=1-63"/>
</dbReference>
<dbReference type="PDB" id="7MPJ">
    <property type="method" value="EM"/>
    <property type="resolution" value="2.70 A"/>
    <property type="chains" value="AW=1-63"/>
</dbReference>
<dbReference type="PDB" id="7N8B">
    <property type="method" value="EM"/>
    <property type="resolution" value="3.05 A"/>
    <property type="chains" value="AW=1-63"/>
</dbReference>
<dbReference type="PDB" id="7NRC">
    <property type="method" value="EM"/>
    <property type="resolution" value="3.90 A"/>
    <property type="chains" value="LY=1-65"/>
</dbReference>
<dbReference type="PDB" id="7NRD">
    <property type="method" value="EM"/>
    <property type="resolution" value="4.36 A"/>
    <property type="chains" value="LY=1-61"/>
</dbReference>
<dbReference type="PDB" id="7ZPQ">
    <property type="method" value="EM"/>
    <property type="resolution" value="3.47 A"/>
    <property type="chains" value="BV=1-126"/>
</dbReference>
<dbReference type="PDB" id="7ZRS">
    <property type="method" value="EM"/>
    <property type="resolution" value="4.80 A"/>
    <property type="chains" value="BV=1-126"/>
</dbReference>
<dbReference type="PDB" id="7ZS5">
    <property type="method" value="EM"/>
    <property type="resolution" value="3.20 A"/>
    <property type="chains" value="BX=1-69"/>
</dbReference>
<dbReference type="PDB" id="7ZUW">
    <property type="method" value="EM"/>
    <property type="resolution" value="4.30 A"/>
    <property type="chains" value="BV=1-126"/>
</dbReference>
<dbReference type="PDB" id="7ZUX">
    <property type="method" value="EM"/>
    <property type="resolution" value="2.50 A"/>
    <property type="chains" value="EV=1-126"/>
</dbReference>
<dbReference type="PDB" id="7ZW0">
    <property type="method" value="EM"/>
    <property type="resolution" value="2.40 A"/>
    <property type="chains" value="LZ=1-155"/>
</dbReference>
<dbReference type="PDB" id="8AAF">
    <property type="method" value="EM"/>
    <property type="resolution" value="2.50 A"/>
    <property type="chains" value="J=1-155"/>
</dbReference>
<dbReference type="PDB" id="8AGT">
    <property type="method" value="EM"/>
    <property type="resolution" value="2.60 A"/>
    <property type="chains" value="J=1-155"/>
</dbReference>
<dbReference type="PDB" id="8AGU">
    <property type="method" value="EM"/>
    <property type="resolution" value="2.70 A"/>
    <property type="chains" value="J=1-155"/>
</dbReference>
<dbReference type="PDB" id="8AGV">
    <property type="method" value="EM"/>
    <property type="resolution" value="2.60 A"/>
    <property type="chains" value="J=1-155"/>
</dbReference>
<dbReference type="PDB" id="8AGW">
    <property type="method" value="EM"/>
    <property type="resolution" value="2.60 A"/>
    <property type="chains" value="J=1-155"/>
</dbReference>
<dbReference type="PDB" id="8AGX">
    <property type="method" value="EM"/>
    <property type="resolution" value="2.40 A"/>
    <property type="chains" value="J=1-155"/>
</dbReference>
<dbReference type="PDB" id="8AGZ">
    <property type="method" value="EM"/>
    <property type="resolution" value="2.60 A"/>
    <property type="chains" value="J=1-155"/>
</dbReference>
<dbReference type="PDB" id="8BIP">
    <property type="method" value="EM"/>
    <property type="resolution" value="3.10 A"/>
    <property type="chains" value="LW=1-126"/>
</dbReference>
<dbReference type="PDB" id="8BJQ">
    <property type="method" value="EM"/>
    <property type="resolution" value="3.80 A"/>
    <property type="chains" value="LW=1-126"/>
</dbReference>
<dbReference type="PDB" id="8BN3">
    <property type="method" value="EM"/>
    <property type="resolution" value="2.40 A"/>
    <property type="chains" value="N4=1-98"/>
</dbReference>
<dbReference type="PDB" id="8BQD">
    <property type="method" value="EM"/>
    <property type="resolution" value="3.90 A"/>
    <property type="chains" value="AE=1-126"/>
</dbReference>
<dbReference type="PDB" id="8BQX">
    <property type="method" value="EM"/>
    <property type="resolution" value="3.80 A"/>
    <property type="chains" value="AE=1-126"/>
</dbReference>
<dbReference type="PDB" id="8CCS">
    <property type="method" value="EM"/>
    <property type="resolution" value="1.97 A"/>
    <property type="chains" value="I=1-155"/>
</dbReference>
<dbReference type="PDB" id="8CDL">
    <property type="method" value="EM"/>
    <property type="resolution" value="2.72 A"/>
    <property type="chains" value="I=1-155"/>
</dbReference>
<dbReference type="PDB" id="8CDR">
    <property type="method" value="EM"/>
    <property type="resolution" value="2.04 A"/>
    <property type="chains" value="I=1-155"/>
</dbReference>
<dbReference type="PDB" id="8CEH">
    <property type="method" value="EM"/>
    <property type="resolution" value="2.05 A"/>
    <property type="chains" value="I=1-155"/>
</dbReference>
<dbReference type="PDB" id="8CF5">
    <property type="method" value="EM"/>
    <property type="resolution" value="2.71 A"/>
    <property type="chains" value="I=1-155"/>
</dbReference>
<dbReference type="PDB" id="8CG8">
    <property type="method" value="EM"/>
    <property type="resolution" value="2.57 A"/>
    <property type="chains" value="I=1-155"/>
</dbReference>
<dbReference type="PDB" id="8CGN">
    <property type="method" value="EM"/>
    <property type="resolution" value="2.28 A"/>
    <property type="chains" value="I=1-155"/>
</dbReference>
<dbReference type="PDB" id="8CIV">
    <property type="method" value="EM"/>
    <property type="resolution" value="2.47 A"/>
    <property type="chains" value="I=1-155"/>
</dbReference>
<dbReference type="PDB" id="8CKU">
    <property type="method" value="EM"/>
    <property type="resolution" value="3.11 A"/>
    <property type="chains" value="I=1-155"/>
</dbReference>
<dbReference type="PDB" id="8CMJ">
    <property type="method" value="EM"/>
    <property type="resolution" value="3.79 A"/>
    <property type="chains" value="I=1-155"/>
</dbReference>
<dbReference type="PDB" id="8K2D">
    <property type="method" value="EM"/>
    <property type="resolution" value="3.20 A"/>
    <property type="chains" value="LW=1-155"/>
</dbReference>
<dbReference type="PDB" id="8K82">
    <property type="method" value="EM"/>
    <property type="resolution" value="3.00 A"/>
    <property type="chains" value="LW=1-155"/>
</dbReference>
<dbReference type="PDB" id="8P4V">
    <property type="method" value="X-ray"/>
    <property type="resolution" value="3.16 A"/>
    <property type="chains" value="7/CY=1-155"/>
</dbReference>
<dbReference type="PDB" id="8P8M">
    <property type="method" value="EM"/>
    <property type="resolution" value="2.66 A"/>
    <property type="chains" value="QW=1-155"/>
</dbReference>
<dbReference type="PDB" id="8P8N">
    <property type="method" value="EM"/>
    <property type="resolution" value="2.15 A"/>
    <property type="chains" value="QW=1-155"/>
</dbReference>
<dbReference type="PDB" id="8P8U">
    <property type="method" value="EM"/>
    <property type="resolution" value="2.23 A"/>
    <property type="chains" value="QW=1-155"/>
</dbReference>
<dbReference type="PDB" id="8P9A">
    <property type="method" value="X-ray"/>
    <property type="resolution" value="2.90 A"/>
    <property type="chains" value="7/CY=1-155"/>
</dbReference>
<dbReference type="PDB" id="8PFR">
    <property type="method" value="EM"/>
    <property type="resolution" value="2.15 A"/>
    <property type="chains" value="QW=1-155"/>
</dbReference>
<dbReference type="PDB" id="8T2X">
    <property type="method" value="EM"/>
    <property type="resolution" value="2.46 A"/>
    <property type="chains" value="AW=1-155"/>
</dbReference>
<dbReference type="PDB" id="8T2Y">
    <property type="method" value="EM"/>
    <property type="resolution" value="2.20 A"/>
    <property type="chains" value="AW=1-155"/>
</dbReference>
<dbReference type="PDB" id="8T2Z">
    <property type="method" value="EM"/>
    <property type="resolution" value="2.40 A"/>
    <property type="chains" value="AW=1-155"/>
</dbReference>
<dbReference type="PDB" id="8T30">
    <property type="method" value="EM"/>
    <property type="resolution" value="2.88 A"/>
    <property type="chains" value="AW=1-155"/>
</dbReference>
<dbReference type="PDB" id="8T3A">
    <property type="method" value="EM"/>
    <property type="resolution" value="2.86 A"/>
    <property type="chains" value="AW=1-155"/>
</dbReference>
<dbReference type="PDB" id="8T3B">
    <property type="method" value="EM"/>
    <property type="resolution" value="3.08 A"/>
    <property type="chains" value="AW=1-155"/>
</dbReference>
<dbReference type="PDB" id="8T3C">
    <property type="method" value="EM"/>
    <property type="resolution" value="3.86 A"/>
    <property type="chains" value="AW=1-155"/>
</dbReference>
<dbReference type="PDB" id="8T3D">
    <property type="method" value="EM"/>
    <property type="resolution" value="2.95 A"/>
    <property type="chains" value="AW=1-155"/>
</dbReference>
<dbReference type="PDB" id="8T3E">
    <property type="method" value="EM"/>
    <property type="resolution" value="3.04 A"/>
    <property type="chains" value="AW=1-155"/>
</dbReference>
<dbReference type="PDB" id="8T3F">
    <property type="method" value="EM"/>
    <property type="resolution" value="3.09 A"/>
    <property type="chains" value="AW=1-155"/>
</dbReference>
<dbReference type="PDB" id="8UT0">
    <property type="method" value="EM"/>
    <property type="resolution" value="3.22 A"/>
    <property type="chains" value="LY=1-65"/>
</dbReference>
<dbReference type="PDB" id="8UTI">
    <property type="method" value="EM"/>
    <property type="resolution" value="3.13 A"/>
    <property type="chains" value="LY=1-65"/>
</dbReference>
<dbReference type="PDB" id="8XU8">
    <property type="method" value="EM"/>
    <property type="resolution" value="3.40 A"/>
    <property type="chains" value="Y=1-126"/>
</dbReference>
<dbReference type="PDB" id="8Y0U">
    <property type="method" value="EM"/>
    <property type="resolution" value="3.59 A"/>
    <property type="chains" value="LW=1-155"/>
</dbReference>
<dbReference type="PDB" id="8YLD">
    <property type="method" value="EM"/>
    <property type="resolution" value="3.90 A"/>
    <property type="chains" value="Y=1-126"/>
</dbReference>
<dbReference type="PDB" id="8YLR">
    <property type="method" value="EM"/>
    <property type="resolution" value="3.90 A"/>
    <property type="chains" value="Y=1-126"/>
</dbReference>
<dbReference type="PDB" id="8Z70">
    <property type="method" value="EM"/>
    <property type="resolution" value="3.20 A"/>
    <property type="chains" value="Y=1-126"/>
</dbReference>
<dbReference type="PDB" id="8Z71">
    <property type="method" value="EM"/>
    <property type="resolution" value="3.60 A"/>
    <property type="chains" value="Y=1-126"/>
</dbReference>
<dbReference type="PDB" id="9F9S">
    <property type="method" value="EM"/>
    <property type="resolution" value="2.90 A"/>
    <property type="chains" value="Lu/Mu=1-155"/>
</dbReference>
<dbReference type="PDBsum" id="2X7N"/>
<dbReference type="PDBsum" id="3J6X"/>
<dbReference type="PDBsum" id="3J6Y"/>
<dbReference type="PDBsum" id="3J77"/>
<dbReference type="PDBsum" id="3J78"/>
<dbReference type="PDBsum" id="4U3M"/>
<dbReference type="PDBsum" id="4U3N"/>
<dbReference type="PDBsum" id="4U3U"/>
<dbReference type="PDBsum" id="4U4N"/>
<dbReference type="PDBsum" id="4U4O"/>
<dbReference type="PDBsum" id="4U4Q"/>
<dbReference type="PDBsum" id="4U4R"/>
<dbReference type="PDBsum" id="4U4U"/>
<dbReference type="PDBsum" id="4U4Y"/>
<dbReference type="PDBsum" id="4U4Z"/>
<dbReference type="PDBsum" id="4U50"/>
<dbReference type="PDBsum" id="4U51"/>
<dbReference type="PDBsum" id="4U52"/>
<dbReference type="PDBsum" id="4U53"/>
<dbReference type="PDBsum" id="4U55"/>
<dbReference type="PDBsum" id="4U56"/>
<dbReference type="PDBsum" id="4U6F"/>
<dbReference type="PDBsum" id="4V4B"/>
<dbReference type="PDBsum" id="4V5Z"/>
<dbReference type="PDBsum" id="4V6I"/>
<dbReference type="PDBsum" id="4V7R"/>
<dbReference type="PDBsum" id="4V88"/>
<dbReference type="PDBsum" id="4V8T"/>
<dbReference type="PDBsum" id="4V8Y"/>
<dbReference type="PDBsum" id="4V8Z"/>
<dbReference type="PDBsum" id="4V91"/>
<dbReference type="PDBsum" id="5APN"/>
<dbReference type="PDBsum" id="5APO"/>
<dbReference type="PDBsum" id="5DAT"/>
<dbReference type="PDBsum" id="5DC3"/>
<dbReference type="PDBsum" id="5DGE"/>
<dbReference type="PDBsum" id="5DGF"/>
<dbReference type="PDBsum" id="5DGV"/>
<dbReference type="PDBsum" id="5FCI"/>
<dbReference type="PDBsum" id="5FCJ"/>
<dbReference type="PDBsum" id="5GAK"/>
<dbReference type="PDBsum" id="5H4P"/>
<dbReference type="PDBsum" id="5I4L"/>
<dbReference type="PDBsum" id="5JUO"/>
<dbReference type="PDBsum" id="5JUP"/>
<dbReference type="PDBsum" id="5JUS"/>
<dbReference type="PDBsum" id="5JUT"/>
<dbReference type="PDBsum" id="5JUU"/>
<dbReference type="PDBsum" id="5LYB"/>
<dbReference type="PDBsum" id="5M1J"/>
<dbReference type="PDBsum" id="5MC6"/>
<dbReference type="PDBsum" id="5MEI"/>
<dbReference type="PDBsum" id="5NDG"/>
<dbReference type="PDBsum" id="5NDV"/>
<dbReference type="PDBsum" id="5NDW"/>
<dbReference type="PDBsum" id="5OBM"/>
<dbReference type="PDBsum" id="5ON6"/>
<dbReference type="PDBsum" id="5T62"/>
<dbReference type="PDBsum" id="5T6R"/>
<dbReference type="PDBsum" id="5TBW"/>
<dbReference type="PDBsum" id="5TGA"/>
<dbReference type="PDBsum" id="5TGM"/>
<dbReference type="PDBsum" id="6GQ1"/>
<dbReference type="PDBsum" id="6GQB"/>
<dbReference type="PDBsum" id="6GQV"/>
<dbReference type="PDBsum" id="6HD7"/>
<dbReference type="PDBsum" id="6HHQ"/>
<dbReference type="PDBsum" id="6I7O"/>
<dbReference type="PDBsum" id="6N8M"/>
<dbReference type="PDBsum" id="6N8N"/>
<dbReference type="PDBsum" id="6N8O"/>
<dbReference type="PDBsum" id="6OIG"/>
<dbReference type="PDBsum" id="6Q8Y"/>
<dbReference type="PDBsum" id="6QIK"/>
<dbReference type="PDBsum" id="6QT0"/>
<dbReference type="PDBsum" id="6QTZ"/>
<dbReference type="PDBsum" id="6R84"/>
<dbReference type="PDBsum" id="6R86"/>
<dbReference type="PDBsum" id="6R87"/>
<dbReference type="PDBsum" id="6RI5"/>
<dbReference type="PDBsum" id="6RZZ"/>
<dbReference type="PDBsum" id="6S05"/>
<dbReference type="PDBsum" id="6S47"/>
<dbReference type="PDBsum" id="6SNT"/>
<dbReference type="PDBsum" id="6SV4"/>
<dbReference type="PDBsum" id="6T4Q"/>
<dbReference type="PDBsum" id="6T7T"/>
<dbReference type="PDBsum" id="6T83"/>
<dbReference type="PDBsum" id="6TB3"/>
<dbReference type="PDBsum" id="6TNU"/>
<dbReference type="PDBsum" id="6WOO"/>
<dbReference type="PDBsum" id="6Z6J"/>
<dbReference type="PDBsum" id="6Z6K"/>
<dbReference type="PDBsum" id="7AZY"/>
<dbReference type="PDBsum" id="7B7D"/>
<dbReference type="PDBsum" id="7MPI"/>
<dbReference type="PDBsum" id="7MPJ"/>
<dbReference type="PDBsum" id="7N8B"/>
<dbReference type="PDBsum" id="7NRC"/>
<dbReference type="PDBsum" id="7NRD"/>
<dbReference type="PDBsum" id="7ZPQ"/>
<dbReference type="PDBsum" id="7ZRS"/>
<dbReference type="PDBsum" id="7ZS5"/>
<dbReference type="PDBsum" id="7ZUW"/>
<dbReference type="PDBsum" id="7ZUX"/>
<dbReference type="PDBsum" id="7ZW0"/>
<dbReference type="PDBsum" id="8AAF"/>
<dbReference type="PDBsum" id="8AGT"/>
<dbReference type="PDBsum" id="8AGU"/>
<dbReference type="PDBsum" id="8AGV"/>
<dbReference type="PDBsum" id="8AGW"/>
<dbReference type="PDBsum" id="8AGX"/>
<dbReference type="PDBsum" id="8AGZ"/>
<dbReference type="PDBsum" id="8BIP"/>
<dbReference type="PDBsum" id="8BJQ"/>
<dbReference type="PDBsum" id="8BN3"/>
<dbReference type="PDBsum" id="8BQD"/>
<dbReference type="PDBsum" id="8BQX"/>
<dbReference type="PDBsum" id="8CCS"/>
<dbReference type="PDBsum" id="8CDL"/>
<dbReference type="PDBsum" id="8CDR"/>
<dbReference type="PDBsum" id="8CEH"/>
<dbReference type="PDBsum" id="8CF5"/>
<dbReference type="PDBsum" id="8CG8"/>
<dbReference type="PDBsum" id="8CGN"/>
<dbReference type="PDBsum" id="8CIV"/>
<dbReference type="PDBsum" id="8CKU"/>
<dbReference type="PDBsum" id="8CMJ"/>
<dbReference type="PDBsum" id="8K2D"/>
<dbReference type="PDBsum" id="8K82"/>
<dbReference type="PDBsum" id="8P4V"/>
<dbReference type="PDBsum" id="8P8M"/>
<dbReference type="PDBsum" id="8P8N"/>
<dbReference type="PDBsum" id="8P8U"/>
<dbReference type="PDBsum" id="8P9A"/>
<dbReference type="PDBsum" id="8PFR"/>
<dbReference type="PDBsum" id="8T2X"/>
<dbReference type="PDBsum" id="8T2Y"/>
<dbReference type="PDBsum" id="8T2Z"/>
<dbReference type="PDBsum" id="8T30"/>
<dbReference type="PDBsum" id="8T3A"/>
<dbReference type="PDBsum" id="8T3B"/>
<dbReference type="PDBsum" id="8T3C"/>
<dbReference type="PDBsum" id="8T3D"/>
<dbReference type="PDBsum" id="8T3E"/>
<dbReference type="PDBsum" id="8T3F"/>
<dbReference type="PDBsum" id="8UT0"/>
<dbReference type="PDBsum" id="8UTI"/>
<dbReference type="PDBsum" id="8XU8"/>
<dbReference type="PDBsum" id="8Y0U"/>
<dbReference type="PDBsum" id="8YLD"/>
<dbReference type="PDBsum" id="8YLR"/>
<dbReference type="PDBsum" id="8Z70"/>
<dbReference type="PDBsum" id="8Z71"/>
<dbReference type="PDBsum" id="9F9S"/>
<dbReference type="EMDB" id="EMD-0047"/>
<dbReference type="EMDB" id="EMD-0048"/>
<dbReference type="EMDB" id="EMD-0049"/>
<dbReference type="EMDB" id="EMD-0202"/>
<dbReference type="EMDB" id="EMD-0372"/>
<dbReference type="EMDB" id="EMD-0373"/>
<dbReference type="EMDB" id="EMD-0374"/>
<dbReference type="EMDB" id="EMD-10068"/>
<dbReference type="EMDB" id="EMD-10071"/>
<dbReference type="EMDB" id="EMD-10098"/>
<dbReference type="EMDB" id="EMD-10262"/>
<dbReference type="EMDB" id="EMD-10315"/>
<dbReference type="EMDB" id="EMD-10377"/>
<dbReference type="EMDB" id="EMD-10397"/>
<dbReference type="EMDB" id="EMD-10398"/>
<dbReference type="EMDB" id="EMD-10431"/>
<dbReference type="EMDB" id="EMD-10537"/>
<dbReference type="EMDB" id="EMD-11096"/>
<dbReference type="EMDB" id="EMD-11097"/>
<dbReference type="EMDB" id="EMD-11951"/>
<dbReference type="EMDB" id="EMD-12081"/>
<dbReference type="EMDB" id="EMD-12534"/>
<dbReference type="EMDB" id="EMD-12535"/>
<dbReference type="EMDB" id="EMD-14926"/>
<dbReference type="EMDB" id="EMD-14979"/>
<dbReference type="EMDB" id="EMD-14990"/>
<dbReference type="EMDB" id="EMD-15296"/>
<dbReference type="EMDB" id="EMD-15423"/>
<dbReference type="EMDB" id="EMD-15424"/>
<dbReference type="EMDB" id="EMD-15425"/>
<dbReference type="EMDB" id="EMD-15426"/>
<dbReference type="EMDB" id="EMD-15427"/>
<dbReference type="EMDB" id="EMD-15428"/>
<dbReference type="EMDB" id="EMD-16086"/>
<dbReference type="EMDB" id="EMD-16090"/>
<dbReference type="EMDB" id="EMD-16182"/>
<dbReference type="EMDB" id="EMD-16191"/>
<dbReference type="EMDB" id="EMD-16563"/>
<dbReference type="EMDB" id="EMD-16591"/>
<dbReference type="EMDB" id="EMD-16594"/>
<dbReference type="EMDB" id="EMD-16609"/>
<dbReference type="EMDB" id="EMD-16616"/>
<dbReference type="EMDB" id="EMD-16634"/>
<dbReference type="EMDB" id="EMD-16648"/>
<dbReference type="EMDB" id="EMD-16684"/>
<dbReference type="EMDB" id="EMD-16702"/>
<dbReference type="EMDB" id="EMD-16729"/>
<dbReference type="EMDB" id="EMD-17549"/>
<dbReference type="EMDB" id="EMD-17550"/>
<dbReference type="EMDB" id="EMD-17552"/>
<dbReference type="EMDB" id="EMD-17653"/>
<dbReference type="EMDB" id="EMD-20077"/>
<dbReference type="EMDB" id="EMD-21859"/>
<dbReference type="EMDB" id="EMD-23934"/>
<dbReference type="EMDB" id="EMD-23935"/>
<dbReference type="EMDB" id="EMD-24235"/>
<dbReference type="EMDB" id="EMD-3461"/>
<dbReference type="EMDB" id="EMD-36839"/>
<dbReference type="EMDB" id="EMD-36945"/>
<dbReference type="EMDB" id="EMD-38660"/>
<dbReference type="EMDB" id="EMD-4140"/>
<dbReference type="EMDB" id="EMD-4427"/>
<dbReference type="EMDB" id="EMD-4474"/>
<dbReference type="EMDB" id="EMD-4560"/>
<dbReference type="EMDB" id="EMD-4630"/>
<dbReference type="EMDB" id="EMD-4636"/>
<dbReference type="EMDB" id="EMD-4751"/>
<dbReference type="EMDB" id="EMD-4752"/>
<dbReference type="EMDB" id="EMD-4753"/>
<dbReference type="EMDB" id="EMD-4884"/>
<dbReference type="EMDB" id="EMD-50259"/>
<dbReference type="EMDB" id="EMD-8362"/>
<dbReference type="EMDB" id="EMD-8368"/>
<dbReference type="SMR" id="P04449"/>
<dbReference type="BioGRID" id="33215">
    <property type="interactions" value="369"/>
</dbReference>
<dbReference type="ComplexPortal" id="CPX-1601">
    <property type="entry name" value="60S cytosolic large ribosomal subunit"/>
</dbReference>
<dbReference type="FunCoup" id="P04449">
    <property type="interactions" value="1087"/>
</dbReference>
<dbReference type="IntAct" id="P04449">
    <property type="interactions" value="84"/>
</dbReference>
<dbReference type="MINT" id="P04449"/>
<dbReference type="STRING" id="4932.YGL031C"/>
<dbReference type="iPTMnet" id="P04449"/>
<dbReference type="PaxDb" id="4932-YGL031C"/>
<dbReference type="PeptideAtlas" id="P04449"/>
<dbReference type="EnsemblFungi" id="YGL031C_mRNA">
    <property type="protein sequence ID" value="YGL031C"/>
    <property type="gene ID" value="YGL031C"/>
</dbReference>
<dbReference type="GeneID" id="852852"/>
<dbReference type="KEGG" id="sce:YGL031C"/>
<dbReference type="AGR" id="SGD:S000002999"/>
<dbReference type="SGD" id="S000002999">
    <property type="gene designation" value="RPL24A"/>
</dbReference>
<dbReference type="VEuPathDB" id="FungiDB:YGL031C"/>
<dbReference type="eggNOG" id="KOG1722">
    <property type="taxonomic scope" value="Eukaryota"/>
</dbReference>
<dbReference type="GeneTree" id="ENSGT00950000183105"/>
<dbReference type="HOGENOM" id="CLU_106411_0_0_1"/>
<dbReference type="InParanoid" id="P04449"/>
<dbReference type="OMA" id="QVFRRMH"/>
<dbReference type="OrthoDB" id="1727108at2759"/>
<dbReference type="BioCyc" id="YEAST:G3O-30547-MONOMER"/>
<dbReference type="Reactome" id="R-SCE-156827">
    <property type="pathway name" value="L13a-mediated translational silencing of Ceruloplasmin expression"/>
</dbReference>
<dbReference type="Reactome" id="R-SCE-1799339">
    <property type="pathway name" value="SRP-dependent cotranslational protein targeting to membrane"/>
</dbReference>
<dbReference type="Reactome" id="R-SCE-72689">
    <property type="pathway name" value="Formation of a pool of free 40S subunits"/>
</dbReference>
<dbReference type="Reactome" id="R-SCE-72706">
    <property type="pathway name" value="GTP hydrolysis and joining of the 60S ribosomal subunit"/>
</dbReference>
<dbReference type="Reactome" id="R-SCE-975956">
    <property type="pathway name" value="Nonsense Mediated Decay (NMD) independent of the Exon Junction Complex (EJC)"/>
</dbReference>
<dbReference type="Reactome" id="R-SCE-975957">
    <property type="pathway name" value="Nonsense Mediated Decay (NMD) enhanced by the Exon Junction Complex (EJC)"/>
</dbReference>
<dbReference type="BioGRID-ORCS" id="852852">
    <property type="hits" value="0 hits in 10 CRISPR screens"/>
</dbReference>
<dbReference type="EvolutionaryTrace" id="P04449"/>
<dbReference type="PRO" id="PR:P04449"/>
<dbReference type="Proteomes" id="UP000002311">
    <property type="component" value="Chromosome VII"/>
</dbReference>
<dbReference type="RNAct" id="P04449">
    <property type="molecule type" value="protein"/>
</dbReference>
<dbReference type="GO" id="GO:0005829">
    <property type="term" value="C:cytosol"/>
    <property type="evidence" value="ECO:0000304"/>
    <property type="project" value="Reactome"/>
</dbReference>
<dbReference type="GO" id="GO:0022625">
    <property type="term" value="C:cytosolic large ribosomal subunit"/>
    <property type="evidence" value="ECO:0000314"/>
    <property type="project" value="SGD"/>
</dbReference>
<dbReference type="GO" id="GO:0003729">
    <property type="term" value="F:mRNA binding"/>
    <property type="evidence" value="ECO:0000318"/>
    <property type="project" value="GO_Central"/>
</dbReference>
<dbReference type="GO" id="GO:0003723">
    <property type="term" value="F:RNA binding"/>
    <property type="evidence" value="ECO:0000314"/>
    <property type="project" value="SGD"/>
</dbReference>
<dbReference type="GO" id="GO:0003735">
    <property type="term" value="F:structural constituent of ribosome"/>
    <property type="evidence" value="ECO:0000318"/>
    <property type="project" value="GO_Central"/>
</dbReference>
<dbReference type="GO" id="GO:0002181">
    <property type="term" value="P:cytoplasmic translation"/>
    <property type="evidence" value="ECO:0000318"/>
    <property type="project" value="GO_Central"/>
</dbReference>
<dbReference type="GO" id="GO:0006414">
    <property type="term" value="P:translational elongation"/>
    <property type="evidence" value="ECO:0000315"/>
    <property type="project" value="SGD"/>
</dbReference>
<dbReference type="GO" id="GO:0006413">
    <property type="term" value="P:translational initiation"/>
    <property type="evidence" value="ECO:0000315"/>
    <property type="project" value="SGD"/>
</dbReference>
<dbReference type="CDD" id="cd00472">
    <property type="entry name" value="Ribosomal_L24e_L24"/>
    <property type="match status" value="1"/>
</dbReference>
<dbReference type="FunFam" id="2.30.170.20:FF:000002">
    <property type="entry name" value="60S ribosomal protein L24"/>
    <property type="match status" value="1"/>
</dbReference>
<dbReference type="Gene3D" id="6.10.250.1270">
    <property type="match status" value="1"/>
</dbReference>
<dbReference type="Gene3D" id="2.30.170.20">
    <property type="entry name" value="Ribosomal protein L24e"/>
    <property type="match status" value="1"/>
</dbReference>
<dbReference type="InterPro" id="IPR038630">
    <property type="entry name" value="L24e/L24_sf"/>
</dbReference>
<dbReference type="InterPro" id="IPR056366">
    <property type="entry name" value="Ribosomal_eL24"/>
</dbReference>
<dbReference type="InterPro" id="IPR000988">
    <property type="entry name" value="Ribosomal_eL24-rel_N"/>
</dbReference>
<dbReference type="InterPro" id="IPR023442">
    <property type="entry name" value="Ribosomal_eL24_CS"/>
</dbReference>
<dbReference type="PANTHER" id="PTHR10792">
    <property type="entry name" value="60S RIBOSOMAL PROTEIN L24"/>
    <property type="match status" value="1"/>
</dbReference>
<dbReference type="PANTHER" id="PTHR10792:SF1">
    <property type="entry name" value="RIBOSOMAL PROTEIN L24"/>
    <property type="match status" value="1"/>
</dbReference>
<dbReference type="Pfam" id="PF01246">
    <property type="entry name" value="Ribosomal_L24e"/>
    <property type="match status" value="1"/>
</dbReference>
<dbReference type="SUPFAM" id="SSF57716">
    <property type="entry name" value="Glucocorticoid receptor-like (DNA-binding domain)"/>
    <property type="match status" value="1"/>
</dbReference>
<dbReference type="PROSITE" id="PS01073">
    <property type="entry name" value="RIBOSOMAL_L24E"/>
    <property type="match status" value="1"/>
</dbReference>
<protein>
    <recommendedName>
        <fullName evidence="6">Large ribosomal subunit protein eL24A</fullName>
    </recommendedName>
    <alternativeName>
        <fullName evidence="7">60S ribosomal protein L24-A</fullName>
    </alternativeName>
    <alternativeName>
        <fullName>L30</fullName>
    </alternativeName>
    <alternativeName>
        <fullName>RP29</fullName>
    </alternativeName>
    <alternativeName>
        <fullName>YL21</fullName>
    </alternativeName>
</protein>
<gene>
    <name evidence="7" type="primary">RPL24A</name>
    <name type="synonym">RP29</name>
    <name type="synonym">RPL30A</name>
    <name type="ordered locus">YGL031C</name>
</gene>
<reference key="1">
    <citation type="journal article" date="1984" name="J. Biol. Chem.">
        <title>A yeast ribosomal protein gene whose intron is in the 5' leader.</title>
        <authorList>
            <person name="Mitra G."/>
            <person name="Warner J.R."/>
        </authorList>
    </citation>
    <scope>NUCLEOTIDE SEQUENCE [GENOMIC DNA]</scope>
</reference>
<reference key="2">
    <citation type="journal article" date="1997" name="Nature">
        <title>The nucleotide sequence of Saccharomyces cerevisiae chromosome VII.</title>
        <authorList>
            <person name="Tettelin H."/>
            <person name="Agostoni-Carbone M.L."/>
            <person name="Albermann K."/>
            <person name="Albers M."/>
            <person name="Arroyo J."/>
            <person name="Backes U."/>
            <person name="Barreiros T."/>
            <person name="Bertani I."/>
            <person name="Bjourson A.J."/>
            <person name="Brueckner M."/>
            <person name="Bruschi C.V."/>
            <person name="Carignani G."/>
            <person name="Castagnoli L."/>
            <person name="Cerdan E."/>
            <person name="Clemente M.L."/>
            <person name="Coblenz A."/>
            <person name="Coglievina M."/>
            <person name="Coissac E."/>
            <person name="Defoor E."/>
            <person name="Del Bino S."/>
            <person name="Delius H."/>
            <person name="Delneri D."/>
            <person name="de Wergifosse P."/>
            <person name="Dujon B."/>
            <person name="Durand P."/>
            <person name="Entian K.-D."/>
            <person name="Eraso P."/>
            <person name="Escribano V."/>
            <person name="Fabiani L."/>
            <person name="Fartmann B."/>
            <person name="Feroli F."/>
            <person name="Feuermann M."/>
            <person name="Frontali L."/>
            <person name="Garcia-Gonzalez M."/>
            <person name="Garcia-Saez M.I."/>
            <person name="Goffeau A."/>
            <person name="Guerreiro P."/>
            <person name="Hani J."/>
            <person name="Hansen M."/>
            <person name="Hebling U."/>
            <person name="Hernandez K."/>
            <person name="Heumann K."/>
            <person name="Hilger F."/>
            <person name="Hofmann B."/>
            <person name="Indge K.J."/>
            <person name="James C.M."/>
            <person name="Klima R."/>
            <person name="Koetter P."/>
            <person name="Kramer B."/>
            <person name="Kramer W."/>
            <person name="Lauquin G."/>
            <person name="Leuther H."/>
            <person name="Louis E.J."/>
            <person name="Maillier E."/>
            <person name="Marconi A."/>
            <person name="Martegani E."/>
            <person name="Mazon M.J."/>
            <person name="Mazzoni C."/>
            <person name="McReynolds A.D.K."/>
            <person name="Melchioretto P."/>
            <person name="Mewes H.-W."/>
            <person name="Minenkova O."/>
            <person name="Mueller-Auer S."/>
            <person name="Nawrocki A."/>
            <person name="Netter P."/>
            <person name="Neu R."/>
            <person name="Nombela C."/>
            <person name="Oliver S.G."/>
            <person name="Panzeri L."/>
            <person name="Paoluzi S."/>
            <person name="Plevani P."/>
            <person name="Portetelle D."/>
            <person name="Portillo F."/>
            <person name="Potier S."/>
            <person name="Purnelle B."/>
            <person name="Rieger M."/>
            <person name="Riles L."/>
            <person name="Rinaldi T."/>
            <person name="Robben J."/>
            <person name="Rodrigues-Pousada C."/>
            <person name="Rodriguez-Belmonte E."/>
            <person name="Rodriguez-Torres A.M."/>
            <person name="Rose M."/>
            <person name="Ruzzi M."/>
            <person name="Saliola M."/>
            <person name="Sanchez-Perez M."/>
            <person name="Schaefer B."/>
            <person name="Schaefer M."/>
            <person name="Scharfe M."/>
            <person name="Schmidheini T."/>
            <person name="Schreer A."/>
            <person name="Skala J."/>
            <person name="Souciet J.-L."/>
            <person name="Steensma H.Y."/>
            <person name="Talla E."/>
            <person name="Thierry A."/>
            <person name="Vandenbol M."/>
            <person name="van der Aart Q.J.M."/>
            <person name="Van Dyck L."/>
            <person name="Vanoni M."/>
            <person name="Verhasselt P."/>
            <person name="Voet M."/>
            <person name="Volckaert G."/>
            <person name="Wambutt R."/>
            <person name="Watson M.D."/>
            <person name="Weber N."/>
            <person name="Wedler E."/>
            <person name="Wedler H."/>
            <person name="Wipfli P."/>
            <person name="Wolf K."/>
            <person name="Wright L.F."/>
            <person name="Zaccaria P."/>
            <person name="Zimmermann M."/>
            <person name="Zollner A."/>
            <person name="Kleine K."/>
        </authorList>
    </citation>
    <scope>NUCLEOTIDE SEQUENCE [LARGE SCALE GENOMIC DNA]</scope>
    <source>
        <strain>ATCC 204508 / S288c</strain>
    </source>
</reference>
<reference key="3">
    <citation type="journal article" date="2014" name="G3 (Bethesda)">
        <title>The reference genome sequence of Saccharomyces cerevisiae: Then and now.</title>
        <authorList>
            <person name="Engel S.R."/>
            <person name="Dietrich F.S."/>
            <person name="Fisk D.G."/>
            <person name="Binkley G."/>
            <person name="Balakrishnan R."/>
            <person name="Costanzo M.C."/>
            <person name="Dwight S.S."/>
            <person name="Hitz B.C."/>
            <person name="Karra K."/>
            <person name="Nash R.S."/>
            <person name="Weng S."/>
            <person name="Wong E.D."/>
            <person name="Lloyd P."/>
            <person name="Skrzypek M.S."/>
            <person name="Miyasato S.R."/>
            <person name="Simison M."/>
            <person name="Cherry J.M."/>
        </authorList>
    </citation>
    <scope>GENOME REANNOTATION</scope>
    <source>
        <strain>ATCC 204508 / S288c</strain>
    </source>
</reference>
<reference key="4">
    <citation type="journal article" date="2007" name="Proc. Natl. Acad. Sci. U.S.A.">
        <title>High-density yeast-tiling array reveals previously undiscovered introns and extensive regulation of meiotic splicing.</title>
        <authorList>
            <person name="Juneau K."/>
            <person name="Palm C."/>
            <person name="Miranda M."/>
            <person name="Davis R.W."/>
        </authorList>
    </citation>
    <scope>NUCLEOTIDE SEQUENCE [MRNA] OF 1-73</scope>
    <source>
        <strain>ATCC 201390 / BY4743</strain>
    </source>
</reference>
<reference key="5">
    <citation type="journal article" date="1998" name="Yeast">
        <title>The list of cytoplasmic ribosomal proteins of Saccharomyces cerevisiae.</title>
        <authorList>
            <person name="Planta R.J."/>
            <person name="Mager W.H."/>
        </authorList>
    </citation>
    <scope>NOMENCLATURE</scope>
    <scope>SUBUNIT</scope>
</reference>
<reference key="6">
    <citation type="journal article" date="2003" name="Nature">
        <title>Global analysis of protein localization in budding yeast.</title>
        <authorList>
            <person name="Huh W.-K."/>
            <person name="Falvo J.V."/>
            <person name="Gerke L.C."/>
            <person name="Carroll A.S."/>
            <person name="Howson R.W."/>
            <person name="Weissman J.S."/>
            <person name="O'Shea E.K."/>
        </authorList>
    </citation>
    <scope>SUBCELLULAR LOCATION [LARGE SCALE ANALYSIS]</scope>
</reference>
<reference key="7">
    <citation type="journal article" date="2003" name="Nature">
        <title>Global analysis of protein expression in yeast.</title>
        <authorList>
            <person name="Ghaemmaghami S."/>
            <person name="Huh W.-K."/>
            <person name="Bower K."/>
            <person name="Howson R.W."/>
            <person name="Belle A."/>
            <person name="Dephoure N."/>
            <person name="O'Shea E.K."/>
            <person name="Weissman J.S."/>
        </authorList>
    </citation>
    <scope>LEVEL OF PROTEIN EXPRESSION [LARGE SCALE ANALYSIS]</scope>
</reference>
<reference key="8">
    <citation type="journal article" date="2012" name="Proc. Natl. Acad. Sci. U.S.A.">
        <title>N-terminal acetylome analyses and functional insights of the N-terminal acetyltransferase NatB.</title>
        <authorList>
            <person name="Van Damme P."/>
            <person name="Lasa M."/>
            <person name="Polevoda B."/>
            <person name="Gazquez C."/>
            <person name="Elosegui-Artola A."/>
            <person name="Kim D.S."/>
            <person name="De Juan-Pardo E."/>
            <person name="Demeyer K."/>
            <person name="Hole K."/>
            <person name="Larrea E."/>
            <person name="Timmerman E."/>
            <person name="Prieto J."/>
            <person name="Arnesen T."/>
            <person name="Sherman F."/>
            <person name="Gevaert K."/>
            <person name="Aldabe R."/>
        </authorList>
    </citation>
    <scope>IDENTIFICATION BY MASS SPECTROMETRY [LARGE SCALE ANALYSIS]</scope>
</reference>
<reference key="9">
    <citation type="journal article" date="2014" name="Curr. Opin. Struct. Biol.">
        <title>A new system for naming ribosomal proteins.</title>
        <authorList>
            <person name="Ban N."/>
            <person name="Beckmann R."/>
            <person name="Cate J.H.D."/>
            <person name="Dinman J.D."/>
            <person name="Dragon F."/>
            <person name="Ellis S.R."/>
            <person name="Lafontaine D.L.J."/>
            <person name="Lindahl L."/>
            <person name="Liljas A."/>
            <person name="Lipton J.M."/>
            <person name="McAlear M.A."/>
            <person name="Moore P.B."/>
            <person name="Noller H.F."/>
            <person name="Ortega J."/>
            <person name="Panse V.G."/>
            <person name="Ramakrishnan V."/>
            <person name="Spahn C.M.T."/>
            <person name="Steitz T.A."/>
            <person name="Tchorzewski M."/>
            <person name="Tollervey D."/>
            <person name="Warren A.J."/>
            <person name="Williamson J.R."/>
            <person name="Wilson D."/>
            <person name="Yonath A."/>
            <person name="Yusupov M."/>
        </authorList>
    </citation>
    <scope>NOMENCLATURE</scope>
</reference>
<reference key="10">
    <citation type="journal article" date="2001" name="Cell">
        <title>Structure of the 80S ribosome from Saccharomyces cerevisiae -- tRNA-ribosome and subunit-subunit interactions.</title>
        <authorList>
            <person name="Spahn C.M.T."/>
            <person name="Beckmann R."/>
            <person name="Eswar N."/>
            <person name="Penczek P.A."/>
            <person name="Sali A."/>
            <person name="Blobel G."/>
            <person name="Frank J."/>
        </authorList>
    </citation>
    <scope>3D-STRUCTURE MODELING OF 4-56</scope>
    <scope>ELECTRON MICROSCOPY</scope>
</reference>
<reference key="11">
    <citation type="journal article" date="2004" name="EMBO J.">
        <title>Domain movements of elongation factor eEF2 and the eukaryotic 80S ribosome facilitate tRNA translocation.</title>
        <authorList>
            <person name="Spahn C.M.T."/>
            <person name="Gomez-Lorenzo M.G."/>
            <person name="Grassucci R.A."/>
            <person name="Joergensen R."/>
            <person name="Andersen G.R."/>
            <person name="Beckmann R."/>
            <person name="Penczek P.A."/>
            <person name="Ballesta J.P.G."/>
            <person name="Frank J."/>
        </authorList>
    </citation>
    <scope>3D-STRUCTURE MODELING OF 1-56</scope>
    <scope>ELECTRON MICROSCOPY</scope>
</reference>
<reference key="12">
    <citation type="journal article" date="2010" name="Science">
        <title>Crystal structure of the eukaryotic ribosome.</title>
        <authorList>
            <person name="Ben-Shem A."/>
            <person name="Jenner L."/>
            <person name="Yusupova G."/>
            <person name="Yusupov M."/>
        </authorList>
    </citation>
    <scope>X-RAY CRYSTALLOGRAPHY (4.0 ANGSTROMS) OF 80S RIBOSOME</scope>
</reference>
<reference key="13">
    <citation type="journal article" date="2011" name="Science">
        <title>The structure of the eukaryotic ribosome at 3.0 A resolution.</title>
        <authorList>
            <person name="Ben-Shem A."/>
            <person name="Garreau de Loubresse N."/>
            <person name="Melnikov S."/>
            <person name="Jenner L."/>
            <person name="Yusupova G."/>
            <person name="Yusupov M."/>
        </authorList>
    </citation>
    <scope>X-RAY CRYSTALLOGRAPHY (3.0 ANGSTROMS) OF 80S RIBOSOME</scope>
    <scope>SUBUNIT</scope>
    <scope>SUBCELLULAR LOCATION</scope>
</reference>
<accession>P04449</accession>
<accession>A2TBN7</accession>
<accession>D6VUA7</accession>